<sequence length="577" mass="65201">MRSHFCAEISEKDVGKTIKVAGWCNTYRDHGGVVFIDLRDKSGLVQLVCDPSSKAYEKALEVRSEFVLVAKGKARLRGPGLENPKLKTGKIEIVLEELVIENKSATPPIEIGNKNVNEDLRLKYRYLDLRSLNAYEIFKLRSEVALIARNALAQKGFLEIETPILSKTTPEGARDYLVPSRVHEGEFFALPQSPQLFKQLLMVGGMDRYFQIARCFRDEDLRADRQPEFTQIDAEMSFCSENDVMGVVEDLLQEIFKAIGHNISKPFKRMPYKEAMENYGSDKPDLRFELPLIEVGDCFMDSSNAIFSNIAQDPKNKRIKALNVKGADAIFSRSVLKELEEFVCQFGAQGLAYLQIKEDGVKGPLVKFLSEKGLKNILEKTGAKTGDIVFFGAGDKKIVLDYMGRLRLKVAETLDLIDKDALNFLWVVNFPMFEKTENGYHAAHHPFTMPKNIECKDLEEIEAHAYDVVLNGVELGGGSIRIHKEEMQKKVFEKINIHEEEAQKKFGFLLEALKFGAPPHGGFAIGFDRLIMLMTKSSSIRDVIAFPKTQKASCLLTDAPSPINEEQLRELHIRLRK</sequence>
<organism>
    <name type="scientific">Helicobacter pylori (strain Shi470)</name>
    <dbReference type="NCBI Taxonomy" id="512562"/>
    <lineage>
        <taxon>Bacteria</taxon>
        <taxon>Pseudomonadati</taxon>
        <taxon>Campylobacterota</taxon>
        <taxon>Epsilonproteobacteria</taxon>
        <taxon>Campylobacterales</taxon>
        <taxon>Helicobacteraceae</taxon>
        <taxon>Helicobacter</taxon>
    </lineage>
</organism>
<evidence type="ECO:0000255" key="1">
    <source>
        <dbReference type="HAMAP-Rule" id="MF_00044"/>
    </source>
</evidence>
<dbReference type="EC" id="6.1.1.23" evidence="1"/>
<dbReference type="EMBL" id="CP001072">
    <property type="protein sequence ID" value="ACD48192.1"/>
    <property type="molecule type" value="Genomic_DNA"/>
</dbReference>
<dbReference type="RefSeq" id="WP_001256335.1">
    <property type="nucleotide sequence ID" value="NC_010698.2"/>
</dbReference>
<dbReference type="SMR" id="B2UTL0"/>
<dbReference type="KEGG" id="hps:HPSH_03785"/>
<dbReference type="HOGENOM" id="CLU_014330_3_2_7"/>
<dbReference type="GO" id="GO:0005737">
    <property type="term" value="C:cytoplasm"/>
    <property type="evidence" value="ECO:0007669"/>
    <property type="project" value="UniProtKB-SubCell"/>
</dbReference>
<dbReference type="GO" id="GO:0004815">
    <property type="term" value="F:aspartate-tRNA ligase activity"/>
    <property type="evidence" value="ECO:0007669"/>
    <property type="project" value="UniProtKB-UniRule"/>
</dbReference>
<dbReference type="GO" id="GO:0050560">
    <property type="term" value="F:aspartate-tRNA(Asn) ligase activity"/>
    <property type="evidence" value="ECO:0007669"/>
    <property type="project" value="UniProtKB-EC"/>
</dbReference>
<dbReference type="GO" id="GO:0005524">
    <property type="term" value="F:ATP binding"/>
    <property type="evidence" value="ECO:0007669"/>
    <property type="project" value="UniProtKB-UniRule"/>
</dbReference>
<dbReference type="GO" id="GO:0003676">
    <property type="term" value="F:nucleic acid binding"/>
    <property type="evidence" value="ECO:0007669"/>
    <property type="project" value="InterPro"/>
</dbReference>
<dbReference type="GO" id="GO:0006422">
    <property type="term" value="P:aspartyl-tRNA aminoacylation"/>
    <property type="evidence" value="ECO:0007669"/>
    <property type="project" value="UniProtKB-UniRule"/>
</dbReference>
<dbReference type="CDD" id="cd00777">
    <property type="entry name" value="AspRS_core"/>
    <property type="match status" value="1"/>
</dbReference>
<dbReference type="CDD" id="cd04317">
    <property type="entry name" value="EcAspRS_like_N"/>
    <property type="match status" value="1"/>
</dbReference>
<dbReference type="Gene3D" id="3.30.930.10">
    <property type="entry name" value="Bira Bifunctional Protein, Domain 2"/>
    <property type="match status" value="1"/>
</dbReference>
<dbReference type="Gene3D" id="3.30.1360.30">
    <property type="entry name" value="GAD-like domain"/>
    <property type="match status" value="1"/>
</dbReference>
<dbReference type="Gene3D" id="2.40.50.140">
    <property type="entry name" value="Nucleic acid-binding proteins"/>
    <property type="match status" value="1"/>
</dbReference>
<dbReference type="HAMAP" id="MF_00044">
    <property type="entry name" value="Asp_tRNA_synth_type1"/>
    <property type="match status" value="1"/>
</dbReference>
<dbReference type="InterPro" id="IPR004364">
    <property type="entry name" value="Aa-tRNA-synt_II"/>
</dbReference>
<dbReference type="InterPro" id="IPR006195">
    <property type="entry name" value="aa-tRNA-synth_II"/>
</dbReference>
<dbReference type="InterPro" id="IPR045864">
    <property type="entry name" value="aa-tRNA-synth_II/BPL/LPL"/>
</dbReference>
<dbReference type="InterPro" id="IPR004524">
    <property type="entry name" value="Asp-tRNA-ligase_1"/>
</dbReference>
<dbReference type="InterPro" id="IPR047089">
    <property type="entry name" value="Asp-tRNA-ligase_1_N"/>
</dbReference>
<dbReference type="InterPro" id="IPR002312">
    <property type="entry name" value="Asp/Asn-tRNA-synth_IIb"/>
</dbReference>
<dbReference type="InterPro" id="IPR047090">
    <property type="entry name" value="AspRS_core"/>
</dbReference>
<dbReference type="InterPro" id="IPR004115">
    <property type="entry name" value="GAD-like_sf"/>
</dbReference>
<dbReference type="InterPro" id="IPR029351">
    <property type="entry name" value="GAD_dom"/>
</dbReference>
<dbReference type="InterPro" id="IPR012340">
    <property type="entry name" value="NA-bd_OB-fold"/>
</dbReference>
<dbReference type="InterPro" id="IPR004365">
    <property type="entry name" value="NA-bd_OB_tRNA"/>
</dbReference>
<dbReference type="NCBIfam" id="TIGR00459">
    <property type="entry name" value="aspS_bact"/>
    <property type="match status" value="1"/>
</dbReference>
<dbReference type="NCBIfam" id="NF001750">
    <property type="entry name" value="PRK00476.1"/>
    <property type="match status" value="1"/>
</dbReference>
<dbReference type="PANTHER" id="PTHR22594:SF5">
    <property type="entry name" value="ASPARTATE--TRNA LIGASE, MITOCHONDRIAL"/>
    <property type="match status" value="1"/>
</dbReference>
<dbReference type="PANTHER" id="PTHR22594">
    <property type="entry name" value="ASPARTYL/LYSYL-TRNA SYNTHETASE"/>
    <property type="match status" value="1"/>
</dbReference>
<dbReference type="Pfam" id="PF02938">
    <property type="entry name" value="GAD"/>
    <property type="match status" value="1"/>
</dbReference>
<dbReference type="Pfam" id="PF00152">
    <property type="entry name" value="tRNA-synt_2"/>
    <property type="match status" value="1"/>
</dbReference>
<dbReference type="Pfam" id="PF01336">
    <property type="entry name" value="tRNA_anti-codon"/>
    <property type="match status" value="1"/>
</dbReference>
<dbReference type="PRINTS" id="PR01042">
    <property type="entry name" value="TRNASYNTHASP"/>
</dbReference>
<dbReference type="SUPFAM" id="SSF55681">
    <property type="entry name" value="Class II aaRS and biotin synthetases"/>
    <property type="match status" value="1"/>
</dbReference>
<dbReference type="SUPFAM" id="SSF55261">
    <property type="entry name" value="GAD domain-like"/>
    <property type="match status" value="1"/>
</dbReference>
<dbReference type="SUPFAM" id="SSF50249">
    <property type="entry name" value="Nucleic acid-binding proteins"/>
    <property type="match status" value="1"/>
</dbReference>
<dbReference type="PROSITE" id="PS50862">
    <property type="entry name" value="AA_TRNA_LIGASE_II"/>
    <property type="match status" value="1"/>
</dbReference>
<keyword id="KW-0030">Aminoacyl-tRNA synthetase</keyword>
<keyword id="KW-0067">ATP-binding</keyword>
<keyword id="KW-0963">Cytoplasm</keyword>
<keyword id="KW-0436">Ligase</keyword>
<keyword id="KW-0547">Nucleotide-binding</keyword>
<keyword id="KW-0648">Protein biosynthesis</keyword>
<gene>
    <name evidence="1" type="primary">aspS</name>
    <name type="ordered locus">HPSH_03785</name>
</gene>
<feature type="chain" id="PRO_1000091000" description="Aspartate--tRNA(Asp/Asn) ligase">
    <location>
        <begin position="1"/>
        <end position="577"/>
    </location>
</feature>
<feature type="region of interest" description="Aspartate" evidence="1">
    <location>
        <begin position="195"/>
        <end position="198"/>
    </location>
</feature>
<feature type="binding site" evidence="1">
    <location>
        <position position="171"/>
    </location>
    <ligand>
        <name>L-aspartate</name>
        <dbReference type="ChEBI" id="CHEBI:29991"/>
    </ligand>
</feature>
<feature type="binding site" evidence="1">
    <location>
        <begin position="217"/>
        <end position="219"/>
    </location>
    <ligand>
        <name>ATP</name>
        <dbReference type="ChEBI" id="CHEBI:30616"/>
    </ligand>
</feature>
<feature type="binding site" evidence="1">
    <location>
        <position position="217"/>
    </location>
    <ligand>
        <name>L-aspartate</name>
        <dbReference type="ChEBI" id="CHEBI:29991"/>
    </ligand>
</feature>
<feature type="binding site" evidence="1">
    <location>
        <position position="226"/>
    </location>
    <ligand>
        <name>ATP</name>
        <dbReference type="ChEBI" id="CHEBI:30616"/>
    </ligand>
</feature>
<feature type="binding site" evidence="1">
    <location>
        <position position="444"/>
    </location>
    <ligand>
        <name>L-aspartate</name>
        <dbReference type="ChEBI" id="CHEBI:29991"/>
    </ligand>
</feature>
<feature type="binding site" evidence="1">
    <location>
        <position position="474"/>
    </location>
    <ligand>
        <name>ATP</name>
        <dbReference type="ChEBI" id="CHEBI:30616"/>
    </ligand>
</feature>
<feature type="binding site" evidence="1">
    <location>
        <position position="481"/>
    </location>
    <ligand>
        <name>L-aspartate</name>
        <dbReference type="ChEBI" id="CHEBI:29991"/>
    </ligand>
</feature>
<feature type="binding site" evidence="1">
    <location>
        <begin position="526"/>
        <end position="529"/>
    </location>
    <ligand>
        <name>ATP</name>
        <dbReference type="ChEBI" id="CHEBI:30616"/>
    </ligand>
</feature>
<feature type="site" description="Important for tRNA non-discrimination" evidence="1">
    <location>
        <position position="30"/>
    </location>
</feature>
<feature type="site" description="Important for tRNA non-discrimination" evidence="1">
    <location>
        <position position="80"/>
    </location>
</feature>
<name>SYDND_HELPS</name>
<reference key="1">
    <citation type="submission" date="2008-05" db="EMBL/GenBank/DDBJ databases">
        <title>Genome sequence of Helicobacter pylori from the remote Amazon: traces of Asian ancestry of the first Americans.</title>
        <authorList>
            <person name="Kersulyte D."/>
            <person name="Kalia A."/>
            <person name="Gilman R.H."/>
            <person name="Berg D.E."/>
        </authorList>
    </citation>
    <scope>NUCLEOTIDE SEQUENCE [LARGE SCALE GENOMIC DNA]</scope>
    <source>
        <strain>Shi470</strain>
    </source>
</reference>
<accession>B2UTL0</accession>
<comment type="function">
    <text evidence="1">Aspartyl-tRNA synthetase with relaxed tRNA specificity since it is able to aspartylate not only its cognate tRNA(Asp) but also tRNA(Asn). Reaction proceeds in two steps: L-aspartate is first activated by ATP to form Asp-AMP and then transferred to the acceptor end of tRNA(Asp/Asn).</text>
</comment>
<comment type="catalytic activity">
    <reaction evidence="1">
        <text>tRNA(Asx) + L-aspartate + ATP = L-aspartyl-tRNA(Asx) + AMP + diphosphate</text>
        <dbReference type="Rhea" id="RHEA:18349"/>
        <dbReference type="Rhea" id="RHEA-COMP:9710"/>
        <dbReference type="Rhea" id="RHEA-COMP:9711"/>
        <dbReference type="ChEBI" id="CHEBI:29991"/>
        <dbReference type="ChEBI" id="CHEBI:30616"/>
        <dbReference type="ChEBI" id="CHEBI:33019"/>
        <dbReference type="ChEBI" id="CHEBI:78442"/>
        <dbReference type="ChEBI" id="CHEBI:78516"/>
        <dbReference type="ChEBI" id="CHEBI:456215"/>
        <dbReference type="EC" id="6.1.1.23"/>
    </reaction>
</comment>
<comment type="subunit">
    <text evidence="1">Homodimer.</text>
</comment>
<comment type="subcellular location">
    <subcellularLocation>
        <location evidence="1">Cytoplasm</location>
    </subcellularLocation>
</comment>
<comment type="similarity">
    <text evidence="1">Belongs to the class-II aminoacyl-tRNA synthetase family. Type 1 subfamily.</text>
</comment>
<proteinExistence type="inferred from homology"/>
<protein>
    <recommendedName>
        <fullName evidence="1">Aspartate--tRNA(Asp/Asn) ligase</fullName>
        <ecNumber evidence="1">6.1.1.23</ecNumber>
    </recommendedName>
    <alternativeName>
        <fullName evidence="1">Aspartyl-tRNA synthetase</fullName>
        <shortName evidence="1">AspRS</shortName>
    </alternativeName>
    <alternativeName>
        <fullName evidence="1">Non-discriminating aspartyl-tRNA synthetase</fullName>
        <shortName evidence="1">ND-AspRS</shortName>
    </alternativeName>
</protein>